<reference key="1">
    <citation type="journal article" date="2007" name="PLoS ONE">
        <title>Complete genomic characterization of a pathogenic A.II strain of Francisella tularensis subspecies tularensis.</title>
        <authorList>
            <person name="Beckstrom-Sternberg S.M."/>
            <person name="Auerbach R.K."/>
            <person name="Godbole S."/>
            <person name="Pearson J.V."/>
            <person name="Beckstrom-Sternberg J.S."/>
            <person name="Deng Z."/>
            <person name="Munk C."/>
            <person name="Kubota K."/>
            <person name="Zhou Y."/>
            <person name="Bruce D."/>
            <person name="Noronha J."/>
            <person name="Scheuermann R.H."/>
            <person name="Wang A."/>
            <person name="Wei X."/>
            <person name="Wang J."/>
            <person name="Hao J."/>
            <person name="Wagner D.M."/>
            <person name="Brettin T.S."/>
            <person name="Brown N."/>
            <person name="Gilna P."/>
            <person name="Keim P.S."/>
        </authorList>
    </citation>
    <scope>NUCLEOTIDE SEQUENCE [LARGE SCALE GENOMIC DNA]</scope>
    <source>
        <strain>WY96-3418</strain>
    </source>
</reference>
<proteinExistence type="inferred from homology"/>
<sequence length="117" mass="13544">MQTIEIGNKAELQACKFLHTQALEILAHNFKALPYGEIDIIALDKDTLVFIEVKYRSKTKFAQAEEMLTYSKQQKLVNSASIYLQHNPQYQDYQCRFDLIAINESNINWIKNAFGVI</sequence>
<organism>
    <name type="scientific">Francisella tularensis subsp. tularensis (strain WY96-3418)</name>
    <dbReference type="NCBI Taxonomy" id="418136"/>
    <lineage>
        <taxon>Bacteria</taxon>
        <taxon>Pseudomonadati</taxon>
        <taxon>Pseudomonadota</taxon>
        <taxon>Gammaproteobacteria</taxon>
        <taxon>Thiotrichales</taxon>
        <taxon>Francisellaceae</taxon>
        <taxon>Francisella</taxon>
    </lineage>
</organism>
<name>Y1281_FRATW</name>
<dbReference type="EMBL" id="CP000608">
    <property type="protein sequence ID" value="ABO47059.1"/>
    <property type="molecule type" value="Genomic_DNA"/>
</dbReference>
<dbReference type="RefSeq" id="WP_003026519.1">
    <property type="nucleotide sequence ID" value="NC_009257.1"/>
</dbReference>
<dbReference type="SMR" id="A4IYQ8"/>
<dbReference type="KEGG" id="ftw:FTW_1281"/>
<dbReference type="HOGENOM" id="CLU_115353_1_1_6"/>
<dbReference type="GO" id="GO:0003676">
    <property type="term" value="F:nucleic acid binding"/>
    <property type="evidence" value="ECO:0007669"/>
    <property type="project" value="InterPro"/>
</dbReference>
<dbReference type="Gene3D" id="3.40.1350.10">
    <property type="match status" value="1"/>
</dbReference>
<dbReference type="HAMAP" id="MF_00048">
    <property type="entry name" value="UPF0102"/>
    <property type="match status" value="1"/>
</dbReference>
<dbReference type="InterPro" id="IPR011335">
    <property type="entry name" value="Restrct_endonuc-II-like"/>
</dbReference>
<dbReference type="InterPro" id="IPR011856">
    <property type="entry name" value="tRNA_endonuc-like_dom_sf"/>
</dbReference>
<dbReference type="InterPro" id="IPR003509">
    <property type="entry name" value="UPF0102_YraN-like"/>
</dbReference>
<dbReference type="NCBIfam" id="NF009150">
    <property type="entry name" value="PRK12497.1-3"/>
    <property type="match status" value="1"/>
</dbReference>
<dbReference type="NCBIfam" id="NF011275">
    <property type="entry name" value="PRK14682.1"/>
    <property type="match status" value="1"/>
</dbReference>
<dbReference type="NCBIfam" id="TIGR00252">
    <property type="entry name" value="YraN family protein"/>
    <property type="match status" value="1"/>
</dbReference>
<dbReference type="PANTHER" id="PTHR34039">
    <property type="entry name" value="UPF0102 PROTEIN YRAN"/>
    <property type="match status" value="1"/>
</dbReference>
<dbReference type="PANTHER" id="PTHR34039:SF1">
    <property type="entry name" value="UPF0102 PROTEIN YRAN"/>
    <property type="match status" value="1"/>
</dbReference>
<dbReference type="Pfam" id="PF02021">
    <property type="entry name" value="UPF0102"/>
    <property type="match status" value="1"/>
</dbReference>
<dbReference type="SUPFAM" id="SSF52980">
    <property type="entry name" value="Restriction endonuclease-like"/>
    <property type="match status" value="1"/>
</dbReference>
<comment type="similarity">
    <text evidence="1">Belongs to the UPF0102 family.</text>
</comment>
<evidence type="ECO:0000255" key="1">
    <source>
        <dbReference type="HAMAP-Rule" id="MF_00048"/>
    </source>
</evidence>
<feature type="chain" id="PRO_0000336181" description="UPF0102 protein FTW_1281">
    <location>
        <begin position="1"/>
        <end position="117"/>
    </location>
</feature>
<gene>
    <name type="ordered locus">FTW_1281</name>
</gene>
<protein>
    <recommendedName>
        <fullName evidence="1">UPF0102 protein FTW_1281</fullName>
    </recommendedName>
</protein>
<accession>A4IYQ8</accession>